<keyword id="KW-0963">Cytoplasm</keyword>
<keyword id="KW-0324">Glycolysis</keyword>
<keyword id="KW-0456">Lyase</keyword>
<keyword id="KW-0460">Magnesium</keyword>
<keyword id="KW-0479">Metal-binding</keyword>
<keyword id="KW-1185">Reference proteome</keyword>
<keyword id="KW-0964">Secreted</keyword>
<comment type="function">
    <text evidence="1">Catalyzes the reversible conversion of 2-phosphoglycerate (2-PG) into phosphoenolpyruvate (PEP). It is essential for the degradation of carbohydrates via glycolysis.</text>
</comment>
<comment type="catalytic activity">
    <reaction evidence="1">
        <text>(2R)-2-phosphoglycerate = phosphoenolpyruvate + H2O</text>
        <dbReference type="Rhea" id="RHEA:10164"/>
        <dbReference type="ChEBI" id="CHEBI:15377"/>
        <dbReference type="ChEBI" id="CHEBI:58289"/>
        <dbReference type="ChEBI" id="CHEBI:58702"/>
        <dbReference type="EC" id="4.2.1.11"/>
    </reaction>
</comment>
<comment type="cofactor">
    <cofactor evidence="1">
        <name>Mg(2+)</name>
        <dbReference type="ChEBI" id="CHEBI:18420"/>
    </cofactor>
    <text evidence="1">Binds a second Mg(2+) ion via substrate during catalysis.</text>
</comment>
<comment type="pathway">
    <text evidence="1">Carbohydrate degradation; glycolysis; pyruvate from D-glyceraldehyde 3-phosphate: step 4/5.</text>
</comment>
<comment type="subcellular location">
    <subcellularLocation>
        <location evidence="1">Cytoplasm</location>
    </subcellularLocation>
    <subcellularLocation>
        <location evidence="1">Secreted</location>
    </subcellularLocation>
    <subcellularLocation>
        <location evidence="1">Cell surface</location>
    </subcellularLocation>
    <text evidence="1">Fractions of enolase are present in both the cytoplasm and on the cell surface.</text>
</comment>
<comment type="similarity">
    <text evidence="1">Belongs to the enolase family.</text>
</comment>
<reference key="1">
    <citation type="submission" date="2007-03" db="EMBL/GenBank/DDBJ databases">
        <title>Genome sequence of Rhodospirillum centenum.</title>
        <authorList>
            <person name="Touchman J.W."/>
            <person name="Bauer C."/>
            <person name="Blankenship R.E."/>
        </authorList>
    </citation>
    <scope>NUCLEOTIDE SEQUENCE [LARGE SCALE GENOMIC DNA]</scope>
    <source>
        <strain>ATCC 51521 / SW</strain>
    </source>
</reference>
<proteinExistence type="inferred from homology"/>
<protein>
    <recommendedName>
        <fullName evidence="1">Enolase</fullName>
        <ecNumber evidence="1">4.2.1.11</ecNumber>
    </recommendedName>
    <alternativeName>
        <fullName evidence="1">2-phospho-D-glycerate hydro-lyase</fullName>
    </alternativeName>
    <alternativeName>
        <fullName evidence="1">2-phosphoglycerate dehydratase</fullName>
    </alternativeName>
</protein>
<organism>
    <name type="scientific">Rhodospirillum centenum (strain ATCC 51521 / SW)</name>
    <dbReference type="NCBI Taxonomy" id="414684"/>
    <lineage>
        <taxon>Bacteria</taxon>
        <taxon>Pseudomonadati</taxon>
        <taxon>Pseudomonadota</taxon>
        <taxon>Alphaproteobacteria</taxon>
        <taxon>Rhodospirillales</taxon>
        <taxon>Rhodospirillaceae</taxon>
        <taxon>Rhodospirillum</taxon>
    </lineage>
</organism>
<name>ENO_RHOCS</name>
<gene>
    <name evidence="1" type="primary">eno</name>
    <name type="ordered locus">RC1_0117</name>
</gene>
<accession>B6IQ30</accession>
<dbReference type="EC" id="4.2.1.11" evidence="1"/>
<dbReference type="EMBL" id="CP000613">
    <property type="protein sequence ID" value="ACI97566.1"/>
    <property type="molecule type" value="Genomic_DNA"/>
</dbReference>
<dbReference type="RefSeq" id="WP_012565357.1">
    <property type="nucleotide sequence ID" value="NC_011420.2"/>
</dbReference>
<dbReference type="SMR" id="B6IQ30"/>
<dbReference type="STRING" id="414684.RC1_0117"/>
<dbReference type="KEGG" id="rce:RC1_0117"/>
<dbReference type="eggNOG" id="COG0148">
    <property type="taxonomic scope" value="Bacteria"/>
</dbReference>
<dbReference type="HOGENOM" id="CLU_031223_2_1_5"/>
<dbReference type="OrthoDB" id="9804716at2"/>
<dbReference type="UniPathway" id="UPA00109">
    <property type="reaction ID" value="UER00187"/>
</dbReference>
<dbReference type="Proteomes" id="UP000001591">
    <property type="component" value="Chromosome"/>
</dbReference>
<dbReference type="GO" id="GO:0009986">
    <property type="term" value="C:cell surface"/>
    <property type="evidence" value="ECO:0007669"/>
    <property type="project" value="UniProtKB-SubCell"/>
</dbReference>
<dbReference type="GO" id="GO:0005576">
    <property type="term" value="C:extracellular region"/>
    <property type="evidence" value="ECO:0007669"/>
    <property type="project" value="UniProtKB-SubCell"/>
</dbReference>
<dbReference type="GO" id="GO:0000015">
    <property type="term" value="C:phosphopyruvate hydratase complex"/>
    <property type="evidence" value="ECO:0007669"/>
    <property type="project" value="InterPro"/>
</dbReference>
<dbReference type="GO" id="GO:0000287">
    <property type="term" value="F:magnesium ion binding"/>
    <property type="evidence" value="ECO:0007669"/>
    <property type="project" value="UniProtKB-UniRule"/>
</dbReference>
<dbReference type="GO" id="GO:0004634">
    <property type="term" value="F:phosphopyruvate hydratase activity"/>
    <property type="evidence" value="ECO:0007669"/>
    <property type="project" value="UniProtKB-UniRule"/>
</dbReference>
<dbReference type="GO" id="GO:0006096">
    <property type="term" value="P:glycolytic process"/>
    <property type="evidence" value="ECO:0007669"/>
    <property type="project" value="UniProtKB-UniRule"/>
</dbReference>
<dbReference type="CDD" id="cd03313">
    <property type="entry name" value="enolase"/>
    <property type="match status" value="1"/>
</dbReference>
<dbReference type="FunFam" id="3.20.20.120:FF:000001">
    <property type="entry name" value="Enolase"/>
    <property type="match status" value="1"/>
</dbReference>
<dbReference type="FunFam" id="3.30.390.10:FF:000001">
    <property type="entry name" value="Enolase"/>
    <property type="match status" value="1"/>
</dbReference>
<dbReference type="Gene3D" id="3.20.20.120">
    <property type="entry name" value="Enolase-like C-terminal domain"/>
    <property type="match status" value="1"/>
</dbReference>
<dbReference type="Gene3D" id="3.30.390.10">
    <property type="entry name" value="Enolase-like, N-terminal domain"/>
    <property type="match status" value="1"/>
</dbReference>
<dbReference type="HAMAP" id="MF_00318">
    <property type="entry name" value="Enolase"/>
    <property type="match status" value="1"/>
</dbReference>
<dbReference type="InterPro" id="IPR000941">
    <property type="entry name" value="Enolase"/>
</dbReference>
<dbReference type="InterPro" id="IPR036849">
    <property type="entry name" value="Enolase-like_C_sf"/>
</dbReference>
<dbReference type="InterPro" id="IPR029017">
    <property type="entry name" value="Enolase-like_N"/>
</dbReference>
<dbReference type="InterPro" id="IPR020810">
    <property type="entry name" value="Enolase_C"/>
</dbReference>
<dbReference type="InterPro" id="IPR020809">
    <property type="entry name" value="Enolase_CS"/>
</dbReference>
<dbReference type="InterPro" id="IPR020811">
    <property type="entry name" value="Enolase_N"/>
</dbReference>
<dbReference type="NCBIfam" id="TIGR01060">
    <property type="entry name" value="eno"/>
    <property type="match status" value="1"/>
</dbReference>
<dbReference type="PANTHER" id="PTHR11902">
    <property type="entry name" value="ENOLASE"/>
    <property type="match status" value="1"/>
</dbReference>
<dbReference type="PANTHER" id="PTHR11902:SF1">
    <property type="entry name" value="ENOLASE"/>
    <property type="match status" value="1"/>
</dbReference>
<dbReference type="Pfam" id="PF00113">
    <property type="entry name" value="Enolase_C"/>
    <property type="match status" value="1"/>
</dbReference>
<dbReference type="Pfam" id="PF03952">
    <property type="entry name" value="Enolase_N"/>
    <property type="match status" value="1"/>
</dbReference>
<dbReference type="PIRSF" id="PIRSF001400">
    <property type="entry name" value="Enolase"/>
    <property type="match status" value="1"/>
</dbReference>
<dbReference type="PRINTS" id="PR00148">
    <property type="entry name" value="ENOLASE"/>
</dbReference>
<dbReference type="SFLD" id="SFLDS00001">
    <property type="entry name" value="Enolase"/>
    <property type="match status" value="1"/>
</dbReference>
<dbReference type="SFLD" id="SFLDF00002">
    <property type="entry name" value="enolase"/>
    <property type="match status" value="1"/>
</dbReference>
<dbReference type="SMART" id="SM01192">
    <property type="entry name" value="Enolase_C"/>
    <property type="match status" value="1"/>
</dbReference>
<dbReference type="SMART" id="SM01193">
    <property type="entry name" value="Enolase_N"/>
    <property type="match status" value="1"/>
</dbReference>
<dbReference type="SUPFAM" id="SSF51604">
    <property type="entry name" value="Enolase C-terminal domain-like"/>
    <property type="match status" value="1"/>
</dbReference>
<dbReference type="SUPFAM" id="SSF54826">
    <property type="entry name" value="Enolase N-terminal domain-like"/>
    <property type="match status" value="1"/>
</dbReference>
<dbReference type="PROSITE" id="PS00164">
    <property type="entry name" value="ENOLASE"/>
    <property type="match status" value="1"/>
</dbReference>
<sequence>MSAIIDIHAREILDSRGNPTVEVEVRLESGAFGRAAVPSGASTGAHEAVELRDGDKARYGGKGVLRAVESVNGEIFDTLSGLEATEQVAIDSIMIELDGTPNKNRLGANAILGVSLAVAKAAADELDQPLYRYVGGTNARTLPVPMMNIINGGAHADNPIDIQEFMVMPVGAETCADSIRMGAEIFHALKKKLKDAGHNTAVGDEGGFAPNLKSTDEALGFIMKAVEAAGYRPGEDVLLALDAASTEFYRNGRYELAGEGKSLDAAGMVAYWQDLVGRYPIVSVEDGMAEDDWDGWKALTDAIGGSVQLVGDDLFVTNPTRLSEGISRGIANSILVKVNQIGSLTETLEAVRIAQSNGYTAVMSHRSGETEDSTIADLAVATNCGQIKTGSLSRSDRIAKYNQLIRIEEGLGRARIFPGRAALKRG</sequence>
<evidence type="ECO:0000255" key="1">
    <source>
        <dbReference type="HAMAP-Rule" id="MF_00318"/>
    </source>
</evidence>
<feature type="chain" id="PRO_1000115904" description="Enolase">
    <location>
        <begin position="1"/>
        <end position="426"/>
    </location>
</feature>
<feature type="active site" description="Proton donor" evidence="1">
    <location>
        <position position="205"/>
    </location>
</feature>
<feature type="active site" description="Proton acceptor" evidence="1">
    <location>
        <position position="337"/>
    </location>
</feature>
<feature type="binding site" evidence="1">
    <location>
        <position position="163"/>
    </location>
    <ligand>
        <name>(2R)-2-phosphoglycerate</name>
        <dbReference type="ChEBI" id="CHEBI:58289"/>
    </ligand>
</feature>
<feature type="binding site" evidence="1">
    <location>
        <position position="242"/>
    </location>
    <ligand>
        <name>Mg(2+)</name>
        <dbReference type="ChEBI" id="CHEBI:18420"/>
    </ligand>
</feature>
<feature type="binding site" evidence="1">
    <location>
        <position position="285"/>
    </location>
    <ligand>
        <name>Mg(2+)</name>
        <dbReference type="ChEBI" id="CHEBI:18420"/>
    </ligand>
</feature>
<feature type="binding site" evidence="1">
    <location>
        <position position="312"/>
    </location>
    <ligand>
        <name>Mg(2+)</name>
        <dbReference type="ChEBI" id="CHEBI:18420"/>
    </ligand>
</feature>
<feature type="binding site" evidence="1">
    <location>
        <position position="337"/>
    </location>
    <ligand>
        <name>(2R)-2-phosphoglycerate</name>
        <dbReference type="ChEBI" id="CHEBI:58289"/>
    </ligand>
</feature>
<feature type="binding site" evidence="1">
    <location>
        <position position="366"/>
    </location>
    <ligand>
        <name>(2R)-2-phosphoglycerate</name>
        <dbReference type="ChEBI" id="CHEBI:58289"/>
    </ligand>
</feature>
<feature type="binding site" evidence="1">
    <location>
        <position position="367"/>
    </location>
    <ligand>
        <name>(2R)-2-phosphoglycerate</name>
        <dbReference type="ChEBI" id="CHEBI:58289"/>
    </ligand>
</feature>
<feature type="binding site" evidence="1">
    <location>
        <position position="388"/>
    </location>
    <ligand>
        <name>(2R)-2-phosphoglycerate</name>
        <dbReference type="ChEBI" id="CHEBI:58289"/>
    </ligand>
</feature>